<gene>
    <name evidence="1" type="primary">nrdR</name>
    <name type="ordered locus">SERP1249</name>
</gene>
<protein>
    <recommendedName>
        <fullName evidence="1">Transcriptional repressor NrdR</fullName>
    </recommendedName>
</protein>
<evidence type="ECO:0000255" key="1">
    <source>
        <dbReference type="HAMAP-Rule" id="MF_00440"/>
    </source>
</evidence>
<dbReference type="EMBL" id="CP000029">
    <property type="protein sequence ID" value="AAW54614.1"/>
    <property type="molecule type" value="Genomic_DNA"/>
</dbReference>
<dbReference type="RefSeq" id="WP_001830825.1">
    <property type="nucleotide sequence ID" value="NC_002976.3"/>
</dbReference>
<dbReference type="SMR" id="Q5HNL8"/>
<dbReference type="STRING" id="176279.SERP1249"/>
<dbReference type="GeneID" id="50018525"/>
<dbReference type="KEGG" id="ser:SERP1249"/>
<dbReference type="eggNOG" id="COG1327">
    <property type="taxonomic scope" value="Bacteria"/>
</dbReference>
<dbReference type="HOGENOM" id="CLU_108412_0_0_9"/>
<dbReference type="Proteomes" id="UP000000531">
    <property type="component" value="Chromosome"/>
</dbReference>
<dbReference type="GO" id="GO:0005524">
    <property type="term" value="F:ATP binding"/>
    <property type="evidence" value="ECO:0007669"/>
    <property type="project" value="UniProtKB-KW"/>
</dbReference>
<dbReference type="GO" id="GO:0003677">
    <property type="term" value="F:DNA binding"/>
    <property type="evidence" value="ECO:0007669"/>
    <property type="project" value="UniProtKB-KW"/>
</dbReference>
<dbReference type="GO" id="GO:0008270">
    <property type="term" value="F:zinc ion binding"/>
    <property type="evidence" value="ECO:0007669"/>
    <property type="project" value="UniProtKB-UniRule"/>
</dbReference>
<dbReference type="GO" id="GO:0045892">
    <property type="term" value="P:negative regulation of DNA-templated transcription"/>
    <property type="evidence" value="ECO:0007669"/>
    <property type="project" value="UniProtKB-UniRule"/>
</dbReference>
<dbReference type="HAMAP" id="MF_00440">
    <property type="entry name" value="NrdR"/>
    <property type="match status" value="1"/>
</dbReference>
<dbReference type="InterPro" id="IPR005144">
    <property type="entry name" value="ATP-cone_dom"/>
</dbReference>
<dbReference type="InterPro" id="IPR055173">
    <property type="entry name" value="NrdR-like_N"/>
</dbReference>
<dbReference type="InterPro" id="IPR003796">
    <property type="entry name" value="RNR_NrdR-like"/>
</dbReference>
<dbReference type="NCBIfam" id="TIGR00244">
    <property type="entry name" value="transcriptional regulator NrdR"/>
    <property type="match status" value="1"/>
</dbReference>
<dbReference type="PANTHER" id="PTHR30455">
    <property type="entry name" value="TRANSCRIPTIONAL REPRESSOR NRDR"/>
    <property type="match status" value="1"/>
</dbReference>
<dbReference type="PANTHER" id="PTHR30455:SF2">
    <property type="entry name" value="TRANSCRIPTIONAL REPRESSOR NRDR"/>
    <property type="match status" value="1"/>
</dbReference>
<dbReference type="Pfam" id="PF03477">
    <property type="entry name" value="ATP-cone"/>
    <property type="match status" value="1"/>
</dbReference>
<dbReference type="Pfam" id="PF22811">
    <property type="entry name" value="Zn_ribbon_NrdR"/>
    <property type="match status" value="1"/>
</dbReference>
<dbReference type="PROSITE" id="PS51161">
    <property type="entry name" value="ATP_CONE"/>
    <property type="match status" value="1"/>
</dbReference>
<feature type="chain" id="PRO_0000182353" description="Transcriptional repressor NrdR">
    <location>
        <begin position="1"/>
        <end position="156"/>
    </location>
</feature>
<feature type="domain" description="ATP-cone" evidence="1">
    <location>
        <begin position="49"/>
        <end position="139"/>
    </location>
</feature>
<feature type="zinc finger region" evidence="1">
    <location>
        <begin position="3"/>
        <end position="34"/>
    </location>
</feature>
<name>NRDR_STAEQ</name>
<sequence length="156" mass="18314">MKCPKCNSTHSRVVDSRHADEANAIRRRRECENCGTRFTTFEHIEVSPLIVVKKDGTREQFLREKILNGLVRSCEKRPVRYQQLEDITNKVEWQLRDEGQTEISSREIGEHVMNLLMHVDQVSYVRFASVYKEFKDVDQLLESMQGILSDNKRSDK</sequence>
<proteinExistence type="inferred from homology"/>
<comment type="function">
    <text evidence="1">Negatively regulates transcription of bacterial ribonucleotide reductase nrd genes and operons by binding to NrdR-boxes.</text>
</comment>
<comment type="cofactor">
    <cofactor evidence="1">
        <name>Zn(2+)</name>
        <dbReference type="ChEBI" id="CHEBI:29105"/>
    </cofactor>
    <text evidence="1">Binds 1 zinc ion.</text>
</comment>
<comment type="similarity">
    <text evidence="1">Belongs to the NrdR family.</text>
</comment>
<keyword id="KW-0067">ATP-binding</keyword>
<keyword id="KW-0238">DNA-binding</keyword>
<keyword id="KW-0479">Metal-binding</keyword>
<keyword id="KW-0547">Nucleotide-binding</keyword>
<keyword id="KW-1185">Reference proteome</keyword>
<keyword id="KW-0678">Repressor</keyword>
<keyword id="KW-0804">Transcription</keyword>
<keyword id="KW-0805">Transcription regulation</keyword>
<keyword id="KW-0862">Zinc</keyword>
<keyword id="KW-0863">Zinc-finger</keyword>
<reference key="1">
    <citation type="journal article" date="2005" name="J. Bacteriol.">
        <title>Insights on evolution of virulence and resistance from the complete genome analysis of an early methicillin-resistant Staphylococcus aureus strain and a biofilm-producing methicillin-resistant Staphylococcus epidermidis strain.</title>
        <authorList>
            <person name="Gill S.R."/>
            <person name="Fouts D.E."/>
            <person name="Archer G.L."/>
            <person name="Mongodin E.F."/>
            <person name="DeBoy R.T."/>
            <person name="Ravel J."/>
            <person name="Paulsen I.T."/>
            <person name="Kolonay J.F."/>
            <person name="Brinkac L.M."/>
            <person name="Beanan M.J."/>
            <person name="Dodson R.J."/>
            <person name="Daugherty S.C."/>
            <person name="Madupu R."/>
            <person name="Angiuoli S.V."/>
            <person name="Durkin A.S."/>
            <person name="Haft D.H."/>
            <person name="Vamathevan J.J."/>
            <person name="Khouri H."/>
            <person name="Utterback T.R."/>
            <person name="Lee C."/>
            <person name="Dimitrov G."/>
            <person name="Jiang L."/>
            <person name="Qin H."/>
            <person name="Weidman J."/>
            <person name="Tran K."/>
            <person name="Kang K.H."/>
            <person name="Hance I.R."/>
            <person name="Nelson K.E."/>
            <person name="Fraser C.M."/>
        </authorList>
    </citation>
    <scope>NUCLEOTIDE SEQUENCE [LARGE SCALE GENOMIC DNA]</scope>
    <source>
        <strain>ATCC 35984 / DSM 28319 / BCRC 17069 / CCUG 31568 / BM 3577 / RP62A</strain>
    </source>
</reference>
<accession>Q5HNL8</accession>
<organism>
    <name type="scientific">Staphylococcus epidermidis (strain ATCC 35984 / DSM 28319 / BCRC 17069 / CCUG 31568 / BM 3577 / RP62A)</name>
    <dbReference type="NCBI Taxonomy" id="176279"/>
    <lineage>
        <taxon>Bacteria</taxon>
        <taxon>Bacillati</taxon>
        <taxon>Bacillota</taxon>
        <taxon>Bacilli</taxon>
        <taxon>Bacillales</taxon>
        <taxon>Staphylococcaceae</taxon>
        <taxon>Staphylococcus</taxon>
    </lineage>
</organism>